<evidence type="ECO:0000250" key="1">
    <source>
        <dbReference type="UniProtKB" id="Q9SE93"/>
    </source>
</evidence>
<evidence type="ECO:0000255" key="2"/>
<evidence type="ECO:0000269" key="3">
    <source>
    </source>
</evidence>
<evidence type="ECO:0000303" key="4">
    <source>
    </source>
</evidence>
<evidence type="ECO:0000305" key="5"/>
<accession>P0DO89</accession>
<sequence>MEGANGKQQKHFVLVHGAGHGAWCWYKLKPLLESSGHKVTAIDLVASGINAKRLDEVDTLHEYSLPLLELMAAIPPGEKVILVGHSFGGFSTAIAMEHYPEKISIAVFIASVMPDAVNPPSYFFNLVFEWSPKDEDPLDTKIEEYGSPDQPRTAIRYGPKYLSSKVYQNCTSEEIELANLLLRPISLFAEDLSKAKAFSAEGYGSVKRAYIICNEDKSFPVGFQHWLVENVGVIESKVIKGADHMAMISKPQQLRQCLQEIADKVV</sequence>
<gene>
    <name evidence="4" type="primary">NS1</name>
</gene>
<name>NS1_STRYX</name>
<reference key="1">
    <citation type="journal article" date="2022" name="Nature">
        <title>Biosynthesis of strychnine.</title>
        <authorList>
            <person name="Hong B."/>
            <person name="Grzech D."/>
            <person name="Caputi L."/>
            <person name="Sonawane P."/>
            <person name="Lopez C.E.R."/>
            <person name="Kamileen M.O."/>
            <person name="Hernandez Lozada N.J."/>
            <person name="Grabe V."/>
            <person name="O'Connor S.E."/>
        </authorList>
    </citation>
    <scope>NUCLEOTIDE SEQUENCE [MRNA]</scope>
    <scope>FUNCTION</scope>
    <scope>CATALYTIC ACTIVITY</scope>
    <scope>PATHWAY</scope>
</reference>
<organism>
    <name type="scientific">Strychnos sp</name>
    <dbReference type="NCBI Taxonomy" id="2946199"/>
    <lineage>
        <taxon>Eukaryota</taxon>
        <taxon>Viridiplantae</taxon>
        <taxon>Streptophyta</taxon>
        <taxon>Embryophyta</taxon>
        <taxon>Tracheophyta</taxon>
        <taxon>Spermatophyta</taxon>
        <taxon>Magnoliopsida</taxon>
        <taxon>eudicotyledons</taxon>
        <taxon>Gunneridae</taxon>
        <taxon>Pentapetalae</taxon>
        <taxon>asterids</taxon>
        <taxon>lamiids</taxon>
        <taxon>Gentianales</taxon>
        <taxon>Loganiaceae</taxon>
        <taxon>Strychnos</taxon>
    </lineage>
</organism>
<proteinExistence type="evidence at protein level"/>
<comment type="function">
    <text evidence="3">Hydrolase involved in the biosynthesis of curare monoterpene indole alkaloids (MIAs), natural products such as diaboline, a pharmacologically active compound used to regulate blood pressure (PubMed:35794473). Curare alkaloids act as animal glycine receptor antagonists (PubMed:35794473). Catalyzes the conversion of dehydropreakuammicine to norfluorocurarine (PubMed:35794473).</text>
</comment>
<comment type="catalytic activity">
    <reaction evidence="3">
        <text>17-dehydropreakuammicine + H2O = norfluorocurarine + methanol + CO2</text>
        <dbReference type="Rhea" id="RHEA:80899"/>
        <dbReference type="ChEBI" id="CHEBI:15377"/>
        <dbReference type="ChEBI" id="CHEBI:16526"/>
        <dbReference type="ChEBI" id="CHEBI:17790"/>
        <dbReference type="ChEBI" id="CHEBI:230469"/>
        <dbReference type="ChEBI" id="CHEBI:231650"/>
        <dbReference type="EC" id="3.1.1.123"/>
    </reaction>
    <physiologicalReaction direction="left-to-right" evidence="3">
        <dbReference type="Rhea" id="RHEA:80900"/>
    </physiologicalReaction>
</comment>
<comment type="pathway">
    <text evidence="3">Alkaloid biosynthesis.</text>
</comment>
<comment type="subunit">
    <text evidence="1">Homodimer.</text>
</comment>
<comment type="similarity">
    <text evidence="5">Belongs to the AB hydrolase superfamily.</text>
</comment>
<protein>
    <recommendedName>
        <fullName evidence="4">Norfluorocurarine synthase 1</fullName>
        <shortName evidence="4">SpNS1</shortName>
        <ecNumber evidence="3">3.1.1.123</ecNumber>
    </recommendedName>
</protein>
<feature type="chain" id="PRO_0000461120" description="Norfluorocurarine synthase 1">
    <location>
        <begin position="1"/>
        <end position="266"/>
    </location>
</feature>
<feature type="domain" description="AB hydrolase-1" evidence="2">
    <location>
        <begin position="11"/>
        <end position="121"/>
    </location>
</feature>
<feature type="active site" evidence="1">
    <location>
        <position position="86"/>
    </location>
</feature>
<feature type="active site" evidence="1">
    <location>
        <position position="216"/>
    </location>
</feature>
<feature type="active site" evidence="1">
    <location>
        <position position="244"/>
    </location>
</feature>
<dbReference type="EC" id="3.1.1.123" evidence="3"/>
<dbReference type="EMBL" id="OM304300">
    <property type="protein sequence ID" value="UQZ09631.1"/>
    <property type="molecule type" value="mRNA"/>
</dbReference>
<dbReference type="SMR" id="P0DO89"/>
<dbReference type="KEGG" id="ag:UQZ09631"/>
<dbReference type="GO" id="GO:0016787">
    <property type="term" value="F:hydrolase activity"/>
    <property type="evidence" value="ECO:0000314"/>
    <property type="project" value="UniProtKB"/>
</dbReference>
<dbReference type="GO" id="GO:0080030">
    <property type="term" value="F:methyl indole-3-acetate esterase activity"/>
    <property type="evidence" value="ECO:0007669"/>
    <property type="project" value="TreeGrafter"/>
</dbReference>
<dbReference type="GO" id="GO:0080032">
    <property type="term" value="F:methyl jasmonate esterase activity"/>
    <property type="evidence" value="ECO:0007669"/>
    <property type="project" value="TreeGrafter"/>
</dbReference>
<dbReference type="GO" id="GO:0080031">
    <property type="term" value="F:methyl salicylate esterase activity"/>
    <property type="evidence" value="ECO:0007669"/>
    <property type="project" value="TreeGrafter"/>
</dbReference>
<dbReference type="GO" id="GO:0009821">
    <property type="term" value="P:alkaloid biosynthetic process"/>
    <property type="evidence" value="ECO:0000314"/>
    <property type="project" value="UniProtKB"/>
</dbReference>
<dbReference type="GO" id="GO:0009694">
    <property type="term" value="P:jasmonic acid metabolic process"/>
    <property type="evidence" value="ECO:0007669"/>
    <property type="project" value="TreeGrafter"/>
</dbReference>
<dbReference type="GO" id="GO:0009696">
    <property type="term" value="P:salicylic acid metabolic process"/>
    <property type="evidence" value="ECO:0007669"/>
    <property type="project" value="TreeGrafter"/>
</dbReference>
<dbReference type="FunFam" id="3.40.50.1820:FF:000051">
    <property type="entry name" value="(S)-hydroxynitrile lyase"/>
    <property type="match status" value="1"/>
</dbReference>
<dbReference type="Gene3D" id="3.40.50.1820">
    <property type="entry name" value="alpha/beta hydrolase"/>
    <property type="match status" value="1"/>
</dbReference>
<dbReference type="InterPro" id="IPR000073">
    <property type="entry name" value="AB_hydrolase_1"/>
</dbReference>
<dbReference type="InterPro" id="IPR029058">
    <property type="entry name" value="AB_hydrolase_fold"/>
</dbReference>
<dbReference type="InterPro" id="IPR045889">
    <property type="entry name" value="MES/HNL"/>
</dbReference>
<dbReference type="PANTHER" id="PTHR10992:SF1083">
    <property type="entry name" value="METHYLESTERASE 1"/>
    <property type="match status" value="1"/>
</dbReference>
<dbReference type="PANTHER" id="PTHR10992">
    <property type="entry name" value="METHYLESTERASE FAMILY MEMBER"/>
    <property type="match status" value="1"/>
</dbReference>
<dbReference type="Pfam" id="PF12697">
    <property type="entry name" value="Abhydrolase_6"/>
    <property type="match status" value="1"/>
</dbReference>
<dbReference type="SUPFAM" id="SSF53474">
    <property type="entry name" value="alpha/beta-Hydrolases"/>
    <property type="match status" value="1"/>
</dbReference>
<keyword id="KW-0017">Alkaloid metabolism</keyword>
<keyword id="KW-0378">Hydrolase</keyword>
<keyword id="KW-0719">Serine esterase</keyword>